<proteinExistence type="inferred from homology"/>
<name>MVP_ZYMVR</name>
<feature type="chain" id="PRO_0000420104" description="P3N-PIPO polyprotein">
    <location>
        <begin position="1"/>
        <end position="996"/>
    </location>
</feature>
<feature type="chain" id="PRO_0000420105" description="P1 protease" evidence="4">
    <location>
        <begin position="1"/>
        <end position="313"/>
    </location>
</feature>
<feature type="chain" id="PRO_0000420106" description="Helper component proteinase" evidence="4">
    <location>
        <begin position="314"/>
        <end position="769"/>
    </location>
</feature>
<feature type="chain" id="PRO_0000408557" description="Movement protein P3N-PIPO">
    <location>
        <begin position="770"/>
        <end position="996"/>
    </location>
</feature>
<feature type="domain" description="Peptidase S30" evidence="6">
    <location>
        <begin position="173"/>
        <end position="313"/>
    </location>
</feature>
<feature type="domain" description="Peptidase C6" evidence="5">
    <location>
        <begin position="647"/>
        <end position="769"/>
    </location>
</feature>
<feature type="short sequence motif" description="Involved in interaction with stylet and aphid transmission" evidence="1">
    <location>
        <begin position="365"/>
        <end position="368"/>
    </location>
</feature>
<feature type="short sequence motif" description="Involved in virions binding and aphid transmission" evidence="1">
    <location>
        <begin position="621"/>
        <end position="623"/>
    </location>
</feature>
<feature type="active site" description="For P1 proteinase activity" evidence="6">
    <location>
        <position position="226"/>
    </location>
</feature>
<feature type="active site" description="For P1 proteinase activity" evidence="6">
    <location>
        <position position="235"/>
    </location>
</feature>
<feature type="active site" description="For P1 proteinase activity" evidence="6">
    <location>
        <position position="267"/>
    </location>
</feature>
<feature type="active site" description="For helper component proteinase activity" evidence="5">
    <location>
        <position position="655"/>
    </location>
</feature>
<feature type="active site" description="For helper component proteinase activity" evidence="5">
    <location>
        <position position="728"/>
    </location>
</feature>
<feature type="site" description="Cleavage; by P1 proteinase" evidence="6">
    <location>
        <begin position="313"/>
        <end position="314"/>
    </location>
</feature>
<feature type="site" description="Cleavage; by autolysis" evidence="5">
    <location>
        <begin position="769"/>
        <end position="770"/>
    </location>
</feature>
<feature type="unsure residue">
    <location>
        <begin position="920"/>
        <end position="926"/>
    </location>
</feature>
<reference key="1">
    <citation type="journal article" date="1995" name="J. Gen. Virol.">
        <title>Characterization of the P1 protein and coding region of the zucchini yellow mosaic virus.</title>
        <authorList>
            <person name="Wisler G.C."/>
            <person name="Purcifull D.E."/>
            <person name="Hiebert E."/>
        </authorList>
    </citation>
    <scope>NUCLEOTIDE SEQUENCE [GENOMIC RNA]</scope>
</reference>
<dbReference type="EC" id="3.4.21.-"/>
<dbReference type="EC" id="3.4.22.45"/>
<dbReference type="EMBL" id="L29569">
    <property type="status" value="NOT_ANNOTATED_CDS"/>
    <property type="molecule type" value="Genomic_RNA"/>
</dbReference>
<dbReference type="SMR" id="P0CK14"/>
<dbReference type="Proteomes" id="UP000008611">
    <property type="component" value="Genome"/>
</dbReference>
<dbReference type="GO" id="GO:0044219">
    <property type="term" value="C:host cell plasmodesma"/>
    <property type="evidence" value="ECO:0007669"/>
    <property type="project" value="UniProtKB-SubCell"/>
</dbReference>
<dbReference type="GO" id="GO:0004197">
    <property type="term" value="F:cysteine-type endopeptidase activity"/>
    <property type="evidence" value="ECO:0007669"/>
    <property type="project" value="InterPro"/>
</dbReference>
<dbReference type="GO" id="GO:0008236">
    <property type="term" value="F:serine-type peptidase activity"/>
    <property type="evidence" value="ECO:0007669"/>
    <property type="project" value="UniProtKB-KW"/>
</dbReference>
<dbReference type="GO" id="GO:0006508">
    <property type="term" value="P:proteolysis"/>
    <property type="evidence" value="ECO:0007669"/>
    <property type="project" value="UniProtKB-KW"/>
</dbReference>
<dbReference type="GO" id="GO:0052170">
    <property type="term" value="P:symbiont-mediated suppression of host innate immune response"/>
    <property type="evidence" value="ECO:0007669"/>
    <property type="project" value="UniProtKB-KW"/>
</dbReference>
<dbReference type="GO" id="GO:0046740">
    <property type="term" value="P:transport of virus in host, cell to cell"/>
    <property type="evidence" value="ECO:0007669"/>
    <property type="project" value="UniProtKB-KW"/>
</dbReference>
<dbReference type="GO" id="GO:0075523">
    <property type="term" value="P:viral translational frameshifting"/>
    <property type="evidence" value="ECO:0007669"/>
    <property type="project" value="UniProtKB-KW"/>
</dbReference>
<dbReference type="Gene3D" id="3.90.70.150">
    <property type="entry name" value="Helper component proteinase"/>
    <property type="match status" value="1"/>
</dbReference>
<dbReference type="InterPro" id="IPR001456">
    <property type="entry name" value="HC-pro"/>
</dbReference>
<dbReference type="InterPro" id="IPR031159">
    <property type="entry name" value="HC_PRO_CPD_dom"/>
</dbReference>
<dbReference type="InterPro" id="IPR042308">
    <property type="entry name" value="HC_PRO_CPD_sf"/>
</dbReference>
<dbReference type="InterPro" id="IPR002540">
    <property type="entry name" value="Pept_S30_P1_potyvir"/>
</dbReference>
<dbReference type="InterPro" id="IPR039560">
    <property type="entry name" value="Potyvirid-P3"/>
</dbReference>
<dbReference type="Pfam" id="PF00851">
    <property type="entry name" value="Peptidase_C6"/>
    <property type="match status" value="1"/>
</dbReference>
<dbReference type="Pfam" id="PF01577">
    <property type="entry name" value="Peptidase_S30"/>
    <property type="match status" value="1"/>
</dbReference>
<dbReference type="Pfam" id="PF13608">
    <property type="entry name" value="Potyvirid-P3"/>
    <property type="match status" value="1"/>
</dbReference>
<dbReference type="PROSITE" id="PS51744">
    <property type="entry name" value="HC_PRO_CPD"/>
    <property type="match status" value="1"/>
</dbReference>
<dbReference type="PROSITE" id="PS51871">
    <property type="entry name" value="PV_P1_PRO"/>
    <property type="match status" value="1"/>
</dbReference>
<accession>P0CK14</accession>
<comment type="function">
    <molecule>Helper component proteinase</molecule>
    <text evidence="2">Required for aphid transmission and also has proteolytic activity. Only cleaves a Gly-Gly dipeptide at its own C-terminus. Interacts with virions and aphid stylets. Acts as a suppressor of RNA-mediated gene silencing, also known as post-transcriptional gene silencing (PTGS), a mechanism of plant viral defense that limits the accumulation of viral RNAs. May have RNA-binding activity.</text>
</comment>
<comment type="function">
    <molecule>Movement protein P3N-PIPO</molecule>
    <text evidence="3">Allows efficient cell to cell propagation, by bypassing the host cell wall barrier. Transports viral genome to neighboring plant cells directly through plasmosdesmata, without any budding.</text>
</comment>
<comment type="catalytic activity">
    <molecule>Helper component proteinase</molecule>
    <reaction>
        <text>Hydrolyzes a Gly-|-Gly bond at its own C-terminus, commonly in the sequence -Tyr-Xaa-Val-Gly-|-Gly, in the processing of the potyviral polyprotein.</text>
        <dbReference type="EC" id="3.4.22.45"/>
    </reaction>
</comment>
<comment type="subunit">
    <molecule>Movement protein P3N-PIPO</molecule>
    <text evidence="3">Interacts (via PIPO domain) with host PCaP1 protein; this interaction may help to anchor the movement complex to the plasma membrane from which the complex could move to the plasmodesmata.</text>
</comment>
<comment type="subcellular location">
    <molecule>Movement protein P3N-PIPO</molecule>
    <subcellularLocation>
        <location evidence="3">Host cell junction</location>
        <location evidence="3">Host plasmodesma</location>
    </subcellularLocation>
</comment>
<comment type="alternative products">
    <event type="ribosomal frameshifting"/>
    <isoform>
        <id>P0CK14-1</id>
        <name>P3N-PIPO polyprotein</name>
        <sequence type="displayed"/>
    </isoform>
    <isoform>
        <id>Q89330-1</id>
        <name>Genome polyprotein</name>
        <sequence type="external"/>
    </isoform>
</comment>
<comment type="domain">
    <text evidence="1">The N-terminus of helper component proteinase is involved in interaction with stylets. The central part is involved in interaction with virions and the C-terminus is involved in cell-to cell movement of the virus (By similarity).</text>
</comment>
<comment type="PTM">
    <text evidence="1">Potyviral RNA is expressed as two polyproteins which undergo post-translational proteolytic processing. Genome polyprotein is processed by NIa-pro, P1 and HC-pro proteinases resulting in the production of at least ten individual proteins. P3N-PIPO is cleaved by P1 and HC-pro proteinases resulting in the production of three individual proteins. The P1 proteinase and the HC-pro cleave only their respective C-termini autocatalytically (By similarity).</text>
</comment>
<comment type="miscellaneous">
    <molecule>Isoform P3N-PIPO polyprotein</molecule>
    <text>Produced by -1 ribosomal frameshifting in P3 ORF.</text>
</comment>
<comment type="similarity">
    <text evidence="7">Belongs to the potyviridae P3N-PIPO polyprotein family.</text>
</comment>
<keyword id="KW-1031">Host cell junction</keyword>
<keyword id="KW-0945">Host-virus interaction</keyword>
<keyword id="KW-0378">Hydrolase</keyword>
<keyword id="KW-1090">Inhibition of host innate immune response by virus</keyword>
<keyword id="KW-0645">Protease</keyword>
<keyword id="KW-0688">Ribosomal frameshifting</keyword>
<keyword id="KW-0720">Serine protease</keyword>
<keyword id="KW-0941">Suppressor of RNA silencing</keyword>
<keyword id="KW-0813">Transport</keyword>
<keyword id="KW-0899">Viral immunoevasion</keyword>
<keyword id="KW-0916">Viral movement protein</keyword>
<evidence type="ECO:0000250" key="1"/>
<evidence type="ECO:0000250" key="2">
    <source>
        <dbReference type="UniProtKB" id="P04517"/>
    </source>
</evidence>
<evidence type="ECO:0000250" key="3">
    <source>
        <dbReference type="UniProtKB" id="P0CK11"/>
    </source>
</evidence>
<evidence type="ECO:0000255" key="4"/>
<evidence type="ECO:0000255" key="5">
    <source>
        <dbReference type="PROSITE-ProRule" id="PRU01080"/>
    </source>
</evidence>
<evidence type="ECO:0000255" key="6">
    <source>
        <dbReference type="PROSITE-ProRule" id="PRU01219"/>
    </source>
</evidence>
<evidence type="ECO:0000305" key="7"/>
<organism>
    <name type="scientific">Zucchini yellow mosaic virus (strain Reunion Island)</name>
    <name type="common">ZYMV</name>
    <dbReference type="NCBI Taxonomy" id="117129"/>
    <lineage>
        <taxon>Viruses</taxon>
        <taxon>Riboviria</taxon>
        <taxon>Orthornavirae</taxon>
        <taxon>Pisuviricota</taxon>
        <taxon>Stelpaviricetes</taxon>
        <taxon>Patatavirales</taxon>
        <taxon>Potyviridae</taxon>
        <taxon>Potyvirus</taxon>
        <taxon>Potyvirus cucurbitaflavitesselati</taxon>
        <taxon>Zucchini yellow mosaic virus</taxon>
    </lineage>
</organism>
<sequence length="996" mass="113760">MAAIMIGSISVPIVESARCATVQTGNRVNIVAPGHVAVCKPQMKSHSYYKHASEKLSKQASESINILNSFFDTDPEMRFRLTRNEMSKVKKGPNGRMILRKPRAQRVLERISFEKIEKGAERQVLPWRVYATVTSIINTFTDERNGIANSSLRSPFYKRSCRKEKKKIVCENVVRSASVNNLCDRVLKIAREKNIPVEMIGKKKNRHTLTFKNFKGSFIGKVSLAHERGQMRHVEMSYEQFGFILQAICRVTNTRCVRDEDIKPGCSGWVLGDDHELTQKFSRLPCLVIRGRDDEGIVNALEPVFFYDDVDHYSSQPEVQFFQGWRRMFDNFKPSSDHVCKVDHGNEECGELAAIFSQALFPVVKLSCQTCREKLSRVSFEEFKDSLAINFTVHKSEWDSLKENPHHDNVLKLIKGATQATQNLKLSSEVMKLVQNHTSTHMKQIQDINRALMKGSLVTQDELDLALKQLLEMTQWFKNHMHLTGEEALKTFRNKRSSKAMINPSLLCDNQLDKNGNFVWGERGYHSKRLFKNFFEEVIPSEGYTKYIVRNFPNGTRKLAIGSLIVPLNLDRARTALLGESIEKEPLTSACVSQQNGNYIHSCCCVTMDDGTPMYSDVKSPTKRHLVIGASGDPKYIDLPASEADRMYIAKEGYCYLNIFLAMLVNVNENEAKDFTKMIRDVLIPMLGQWPSLMDVATAAYILGVFHPETRCAELPRILVDHATQTMHVIDSYGSLTVGYHVLKAGTVNHLIQFASNDLQSEMKHYRVGGTPTQRIKLEEQLIKGIFKPKLMMQLLQDDPYVLILGMVSPTILVHMYRMRHFERGIEMWIKRDHEVGKIFVILEQLTRKVALTEVLVDQLDLISEASPHLLEIMKGCQDNQRAYVPALDLLTVQVEREFSNKELKVNGYPDLQQTLYDMREKNICKAIARFMARAKLAGKIMCNRAIEAILDFYGEKIDPASKRRKARIFAAICSRVLYHDPSTCKEHSRCRHAQI</sequence>
<protein>
    <recommendedName>
        <fullName>P3N-PIPO polyprotein</fullName>
    </recommendedName>
    <component>
        <recommendedName>
            <fullName>P1 protease</fullName>
            <ecNumber>3.4.21.-</ecNumber>
        </recommendedName>
        <alternativeName>
            <fullName>N-terminal protein</fullName>
        </alternativeName>
        <alternativeName>
            <fullName>P1 proteinase</fullName>
        </alternativeName>
    </component>
    <component>
        <recommendedName>
            <fullName>Helper component proteinase</fullName>
            <shortName>HC-pro</shortName>
            <ecNumber>3.4.22.45</ecNumber>
        </recommendedName>
    </component>
    <component>
        <recommendedName>
            <fullName>Movement protein P3N-PIPO</fullName>
        </recommendedName>
        <alternativeName>
            <fullName>Pretty interesting potyviridae ORF</fullName>
            <shortName>PIPO</shortName>
        </alternativeName>
    </component>
</protein>
<organismHost>
    <name type="scientific">Citrullus lanatus</name>
    <name type="common">Watermelon</name>
    <name type="synonym">Citrullus vulgaris</name>
    <dbReference type="NCBI Taxonomy" id="3654"/>
</organismHost>
<organismHost>
    <name type="scientific">Cucumis melo</name>
    <name type="common">Muskmelon</name>
    <dbReference type="NCBI Taxonomy" id="3656"/>
</organismHost>
<organismHost>
    <name type="scientific">Cucumis sativus</name>
    <name type="common">Cucumber</name>
    <dbReference type="NCBI Taxonomy" id="3659"/>
</organismHost>
<organismHost>
    <name type="scientific">Cucurbita pepo</name>
    <name type="common">Vegetable marrow</name>
    <name type="synonym">Summer squash</name>
    <dbReference type="NCBI Taxonomy" id="3663"/>
</organismHost>